<evidence type="ECO:0000250" key="1">
    <source>
        <dbReference type="UniProtKB" id="C0H9B6"/>
    </source>
</evidence>
<evidence type="ECO:0000250" key="2">
    <source>
        <dbReference type="UniProtKB" id="P10761"/>
    </source>
</evidence>
<evidence type="ECO:0000255" key="3"/>
<evidence type="ECO:0000255" key="4">
    <source>
        <dbReference type="PROSITE-ProRule" id="PRU00375"/>
    </source>
</evidence>
<evidence type="ECO:0000305" key="5"/>
<organism>
    <name type="scientific">Mus musculus</name>
    <name type="common">Mouse</name>
    <dbReference type="NCBI Taxonomy" id="10090"/>
    <lineage>
        <taxon>Eukaryota</taxon>
        <taxon>Metazoa</taxon>
        <taxon>Chordata</taxon>
        <taxon>Craniata</taxon>
        <taxon>Vertebrata</taxon>
        <taxon>Euteleostomi</taxon>
        <taxon>Mammalia</taxon>
        <taxon>Eutheria</taxon>
        <taxon>Euarchontoglires</taxon>
        <taxon>Glires</taxon>
        <taxon>Rodentia</taxon>
        <taxon>Myomorpha</taxon>
        <taxon>Muroidea</taxon>
        <taxon>Muridae</taxon>
        <taxon>Murinae</taxon>
        <taxon>Mus</taxon>
        <taxon>Mus</taxon>
    </lineage>
</organism>
<gene>
    <name type="primary">Zpld1</name>
</gene>
<comment type="function">
    <text evidence="1">Glycoprotein which is a component of the gelatinous extracellular matrix in the cupulae of the vestibular organ.</text>
</comment>
<comment type="subcellular location">
    <molecule>Zona pellucida-like domain-containing protein 1</molecule>
    <subcellularLocation>
        <location evidence="1">Cytoplasmic vesicle membrane</location>
        <topology evidence="3">Single-pass type I membrane protein</topology>
    </subcellularLocation>
</comment>
<comment type="subcellular location">
    <molecule>Zona pellucida-like domain-containing protein 1, secreted form</molecule>
    <subcellularLocation>
        <location evidence="1">Secreted</location>
        <location evidence="1">Extracellular space</location>
        <location evidence="1">Extracellular matrix</location>
    </subcellularLocation>
</comment>
<comment type="PTM">
    <text evidence="1">Proteolytically cleaved before the transmembrane segment to yield the secreted form found in the extracellular matrix of the cupula.</text>
</comment>
<protein>
    <recommendedName>
        <fullName>Zona pellucida-like domain-containing protein 1</fullName>
        <shortName>ZP domain-containing protein 1</shortName>
    </recommendedName>
    <alternativeName>
        <fullName evidence="1">Cupulin</fullName>
    </alternativeName>
    <component>
        <recommendedName>
            <fullName evidence="1">Zona pellucida-like domain-containing protein 1, secreted form</fullName>
        </recommendedName>
    </component>
</protein>
<proteinExistence type="evidence at transcript level"/>
<sequence length="415" mass="45448">MERVWLLFLLAIRVSPGSAQFNSYNCDANLHSRFPAERDISVYCGVQAITMKINFCTVLFSGYSETDLALNGRHGDSHCRGFINNNTFPAVVIFIINLSTLEGCGNNLVVSTIPGVGASGNATTVQIGNISGYIDTPDPPAVISYLPGLLYKFSCSYPLEYLVNNTQLASSSAAISVRENNGTFVSTLNLLLYNDSTYREQLIIPSIGLPLKTKVFAAVQATNLDGRWNVLMDYCYTTPSGNPNDDTRYDLFLSCDKDPQTTVIENGRSQRGRFSFEVFRFVKHKNQKMSTVFLHCLTKLCRADDCPLLMPICGNRKRRDAQSWTTWAPQSTSGNAVLSAGPIITRSDETPTNNSQLGSLSVPPFQLNAVTSSLISGMVILGVLCFSLLLCSLALLHRKGSTSLVLNGVRNPVFE</sequence>
<keyword id="KW-0968">Cytoplasmic vesicle</keyword>
<keyword id="KW-1015">Disulfide bond</keyword>
<keyword id="KW-0272">Extracellular matrix</keyword>
<keyword id="KW-0325">Glycoprotein</keyword>
<keyword id="KW-0472">Membrane</keyword>
<keyword id="KW-1185">Reference proteome</keyword>
<keyword id="KW-0964">Secreted</keyword>
<keyword id="KW-0732">Signal</keyword>
<keyword id="KW-0812">Transmembrane</keyword>
<keyword id="KW-1133">Transmembrane helix</keyword>
<feature type="signal peptide" evidence="3">
    <location>
        <begin position="1"/>
        <end position="19"/>
    </location>
</feature>
<feature type="chain" id="PRO_0000307286" description="Zona pellucida-like domain-containing protein 1">
    <location>
        <begin position="20"/>
        <end position="415"/>
    </location>
</feature>
<feature type="chain" id="PRO_0000441816" description="Zona pellucida-like domain-containing protein 1, secreted form" evidence="5">
    <location>
        <begin position="20"/>
        <end position="319"/>
    </location>
</feature>
<feature type="topological domain" description="Extracellular" evidence="3">
    <location>
        <begin position="20"/>
        <end position="373"/>
    </location>
</feature>
<feature type="transmembrane region" description="Helical" evidence="3">
    <location>
        <begin position="374"/>
        <end position="394"/>
    </location>
</feature>
<feature type="topological domain" description="Cytoplasmic" evidence="3">
    <location>
        <begin position="395"/>
        <end position="415"/>
    </location>
</feature>
<feature type="domain" description="ZP" evidence="4">
    <location>
        <begin position="43"/>
        <end position="320"/>
    </location>
</feature>
<feature type="site" description="Cleavage" evidence="2">
    <location>
        <begin position="319"/>
        <end position="320"/>
    </location>
</feature>
<feature type="glycosylation site" description="N-linked (GlcNAc...) asparagine" evidence="3">
    <location>
        <position position="164"/>
    </location>
</feature>
<feature type="disulfide bond" evidence="2">
    <location>
        <begin position="44"/>
        <end position="155"/>
    </location>
</feature>
<feature type="disulfide bond" evidence="2">
    <location>
        <begin position="79"/>
        <end position="104"/>
    </location>
</feature>
<feature type="disulfide bond" evidence="2">
    <location>
        <begin position="235"/>
        <end position="296"/>
    </location>
</feature>
<feature type="disulfide bond" evidence="2">
    <location>
        <begin position="255"/>
        <end position="313"/>
    </location>
</feature>
<feature type="sequence conflict" description="In Ref. 2; AAI16255." evidence="5" ref="2">
    <original>G</original>
    <variation>V</variation>
    <location>
        <position position="358"/>
    </location>
</feature>
<feature type="sequence conflict" description="In Ref. 2; AAI16255." evidence="5" ref="2">
    <original>G</original>
    <variation>A</variation>
    <location>
        <position position="408"/>
    </location>
</feature>
<reference key="1">
    <citation type="journal article" date="2005" name="Science">
        <title>The transcriptional landscape of the mammalian genome.</title>
        <authorList>
            <person name="Carninci P."/>
            <person name="Kasukawa T."/>
            <person name="Katayama S."/>
            <person name="Gough J."/>
            <person name="Frith M.C."/>
            <person name="Maeda N."/>
            <person name="Oyama R."/>
            <person name="Ravasi T."/>
            <person name="Lenhard B."/>
            <person name="Wells C."/>
            <person name="Kodzius R."/>
            <person name="Shimokawa K."/>
            <person name="Bajic V.B."/>
            <person name="Brenner S.E."/>
            <person name="Batalov S."/>
            <person name="Forrest A.R."/>
            <person name="Zavolan M."/>
            <person name="Davis M.J."/>
            <person name="Wilming L.G."/>
            <person name="Aidinis V."/>
            <person name="Allen J.E."/>
            <person name="Ambesi-Impiombato A."/>
            <person name="Apweiler R."/>
            <person name="Aturaliya R.N."/>
            <person name="Bailey T.L."/>
            <person name="Bansal M."/>
            <person name="Baxter L."/>
            <person name="Beisel K.W."/>
            <person name="Bersano T."/>
            <person name="Bono H."/>
            <person name="Chalk A.M."/>
            <person name="Chiu K.P."/>
            <person name="Choudhary V."/>
            <person name="Christoffels A."/>
            <person name="Clutterbuck D.R."/>
            <person name="Crowe M.L."/>
            <person name="Dalla E."/>
            <person name="Dalrymple B.P."/>
            <person name="de Bono B."/>
            <person name="Della Gatta G."/>
            <person name="di Bernardo D."/>
            <person name="Down T."/>
            <person name="Engstrom P."/>
            <person name="Fagiolini M."/>
            <person name="Faulkner G."/>
            <person name="Fletcher C.F."/>
            <person name="Fukushima T."/>
            <person name="Furuno M."/>
            <person name="Futaki S."/>
            <person name="Gariboldi M."/>
            <person name="Georgii-Hemming P."/>
            <person name="Gingeras T.R."/>
            <person name="Gojobori T."/>
            <person name="Green R.E."/>
            <person name="Gustincich S."/>
            <person name="Harbers M."/>
            <person name="Hayashi Y."/>
            <person name="Hensch T.K."/>
            <person name="Hirokawa N."/>
            <person name="Hill D."/>
            <person name="Huminiecki L."/>
            <person name="Iacono M."/>
            <person name="Ikeo K."/>
            <person name="Iwama A."/>
            <person name="Ishikawa T."/>
            <person name="Jakt M."/>
            <person name="Kanapin A."/>
            <person name="Katoh M."/>
            <person name="Kawasawa Y."/>
            <person name="Kelso J."/>
            <person name="Kitamura H."/>
            <person name="Kitano H."/>
            <person name="Kollias G."/>
            <person name="Krishnan S.P."/>
            <person name="Kruger A."/>
            <person name="Kummerfeld S.K."/>
            <person name="Kurochkin I.V."/>
            <person name="Lareau L.F."/>
            <person name="Lazarevic D."/>
            <person name="Lipovich L."/>
            <person name="Liu J."/>
            <person name="Liuni S."/>
            <person name="McWilliam S."/>
            <person name="Madan Babu M."/>
            <person name="Madera M."/>
            <person name="Marchionni L."/>
            <person name="Matsuda H."/>
            <person name="Matsuzawa S."/>
            <person name="Miki H."/>
            <person name="Mignone F."/>
            <person name="Miyake S."/>
            <person name="Morris K."/>
            <person name="Mottagui-Tabar S."/>
            <person name="Mulder N."/>
            <person name="Nakano N."/>
            <person name="Nakauchi H."/>
            <person name="Ng P."/>
            <person name="Nilsson R."/>
            <person name="Nishiguchi S."/>
            <person name="Nishikawa S."/>
            <person name="Nori F."/>
            <person name="Ohara O."/>
            <person name="Okazaki Y."/>
            <person name="Orlando V."/>
            <person name="Pang K.C."/>
            <person name="Pavan W.J."/>
            <person name="Pavesi G."/>
            <person name="Pesole G."/>
            <person name="Petrovsky N."/>
            <person name="Piazza S."/>
            <person name="Reed J."/>
            <person name="Reid J.F."/>
            <person name="Ring B.Z."/>
            <person name="Ringwald M."/>
            <person name="Rost B."/>
            <person name="Ruan Y."/>
            <person name="Salzberg S.L."/>
            <person name="Sandelin A."/>
            <person name="Schneider C."/>
            <person name="Schoenbach C."/>
            <person name="Sekiguchi K."/>
            <person name="Semple C.A."/>
            <person name="Seno S."/>
            <person name="Sessa L."/>
            <person name="Sheng Y."/>
            <person name="Shibata Y."/>
            <person name="Shimada H."/>
            <person name="Shimada K."/>
            <person name="Silva D."/>
            <person name="Sinclair B."/>
            <person name="Sperling S."/>
            <person name="Stupka E."/>
            <person name="Sugiura K."/>
            <person name="Sultana R."/>
            <person name="Takenaka Y."/>
            <person name="Taki K."/>
            <person name="Tammoja K."/>
            <person name="Tan S.L."/>
            <person name="Tang S."/>
            <person name="Taylor M.S."/>
            <person name="Tegner J."/>
            <person name="Teichmann S.A."/>
            <person name="Ueda H.R."/>
            <person name="van Nimwegen E."/>
            <person name="Verardo R."/>
            <person name="Wei C.L."/>
            <person name="Yagi K."/>
            <person name="Yamanishi H."/>
            <person name="Zabarovsky E."/>
            <person name="Zhu S."/>
            <person name="Zimmer A."/>
            <person name="Hide W."/>
            <person name="Bult C."/>
            <person name="Grimmond S.M."/>
            <person name="Teasdale R.D."/>
            <person name="Liu E.T."/>
            <person name="Brusic V."/>
            <person name="Quackenbush J."/>
            <person name="Wahlestedt C."/>
            <person name="Mattick J.S."/>
            <person name="Hume D.A."/>
            <person name="Kai C."/>
            <person name="Sasaki D."/>
            <person name="Tomaru Y."/>
            <person name="Fukuda S."/>
            <person name="Kanamori-Katayama M."/>
            <person name="Suzuki M."/>
            <person name="Aoki J."/>
            <person name="Arakawa T."/>
            <person name="Iida J."/>
            <person name="Imamura K."/>
            <person name="Itoh M."/>
            <person name="Kato T."/>
            <person name="Kawaji H."/>
            <person name="Kawagashira N."/>
            <person name="Kawashima T."/>
            <person name="Kojima M."/>
            <person name="Kondo S."/>
            <person name="Konno H."/>
            <person name="Nakano K."/>
            <person name="Ninomiya N."/>
            <person name="Nishio T."/>
            <person name="Okada M."/>
            <person name="Plessy C."/>
            <person name="Shibata K."/>
            <person name="Shiraki T."/>
            <person name="Suzuki S."/>
            <person name="Tagami M."/>
            <person name="Waki K."/>
            <person name="Watahiki A."/>
            <person name="Okamura-Oho Y."/>
            <person name="Suzuki H."/>
            <person name="Kawai J."/>
            <person name="Hayashizaki Y."/>
        </authorList>
    </citation>
    <scope>NUCLEOTIDE SEQUENCE [LARGE SCALE MRNA]</scope>
    <source>
        <strain>C57BL/6J</strain>
        <tissue>Embryo</tissue>
        <tissue>Head</tissue>
        <tissue>Kidney</tissue>
    </source>
</reference>
<reference key="2">
    <citation type="journal article" date="2004" name="Genome Res.">
        <title>The status, quality, and expansion of the NIH full-length cDNA project: the Mammalian Gene Collection (MGC).</title>
        <authorList>
            <consortium name="The MGC Project Team"/>
        </authorList>
    </citation>
    <scope>NUCLEOTIDE SEQUENCE [LARGE SCALE MRNA]</scope>
</reference>
<name>ZPLD1_MOUSE</name>
<dbReference type="EMBL" id="AK034628">
    <property type="protein sequence ID" value="BAC28777.1"/>
    <property type="molecule type" value="mRNA"/>
</dbReference>
<dbReference type="EMBL" id="AK047981">
    <property type="protein sequence ID" value="BAC33205.1"/>
    <property type="molecule type" value="mRNA"/>
</dbReference>
<dbReference type="EMBL" id="AK052599">
    <property type="protein sequence ID" value="BAC35056.1"/>
    <property type="molecule type" value="mRNA"/>
</dbReference>
<dbReference type="EMBL" id="BC116254">
    <property type="protein sequence ID" value="AAI16255.1"/>
    <property type="molecule type" value="mRNA"/>
</dbReference>
<dbReference type="EMBL" id="BC116255">
    <property type="protein sequence ID" value="AAI16256.1"/>
    <property type="molecule type" value="mRNA"/>
</dbReference>
<dbReference type="CCDS" id="CCDS28215.1"/>
<dbReference type="RefSeq" id="NP_001404801.1">
    <property type="nucleotide sequence ID" value="NM_001417872.1"/>
</dbReference>
<dbReference type="RefSeq" id="NP_848835.1">
    <property type="nucleotide sequence ID" value="NM_178720.5"/>
</dbReference>
<dbReference type="RefSeq" id="XP_006522195.1">
    <property type="nucleotide sequence ID" value="XM_006522132.2"/>
</dbReference>
<dbReference type="SMR" id="Q8BGZ8"/>
<dbReference type="FunCoup" id="Q8BGZ8">
    <property type="interactions" value="188"/>
</dbReference>
<dbReference type="STRING" id="10090.ENSMUSP00000119774"/>
<dbReference type="GlyCosmos" id="Q8BGZ8">
    <property type="glycosylation" value="1 site, No reported glycans"/>
</dbReference>
<dbReference type="GlyGen" id="Q8BGZ8">
    <property type="glycosylation" value="1 site"/>
</dbReference>
<dbReference type="iPTMnet" id="Q8BGZ8"/>
<dbReference type="PhosphoSitePlus" id="Q8BGZ8"/>
<dbReference type="jPOST" id="Q8BGZ8"/>
<dbReference type="PaxDb" id="10090-ENSMUSP00000119774"/>
<dbReference type="Antibodypedia" id="32313">
    <property type="antibodies" value="91 antibodies from 18 providers"/>
</dbReference>
<dbReference type="Ensembl" id="ENSMUST00000036412.4">
    <property type="protein sequence ID" value="ENSMUSP00000049012.4"/>
    <property type="gene ID" value="ENSMUSG00000064310.11"/>
</dbReference>
<dbReference type="Ensembl" id="ENSMUST00000143914.8">
    <property type="protein sequence ID" value="ENSMUSP00000119774.2"/>
    <property type="gene ID" value="ENSMUSG00000064310.11"/>
</dbReference>
<dbReference type="GeneID" id="239852"/>
<dbReference type="KEGG" id="mmu:239852"/>
<dbReference type="UCSC" id="uc007zlk.1">
    <property type="organism name" value="mouse"/>
</dbReference>
<dbReference type="AGR" id="MGI:2443415"/>
<dbReference type="CTD" id="131368"/>
<dbReference type="MGI" id="MGI:2443415">
    <property type="gene designation" value="Zpld1"/>
</dbReference>
<dbReference type="VEuPathDB" id="HostDB:ENSMUSG00000064310"/>
<dbReference type="eggNOG" id="ENOG502QQQ1">
    <property type="taxonomic scope" value="Eukaryota"/>
</dbReference>
<dbReference type="GeneTree" id="ENSGT00940000156527"/>
<dbReference type="HOGENOM" id="CLU_045259_2_0_1"/>
<dbReference type="InParanoid" id="Q8BGZ8"/>
<dbReference type="OMA" id="FLMPVCG"/>
<dbReference type="OrthoDB" id="9274484at2759"/>
<dbReference type="PhylomeDB" id="Q8BGZ8"/>
<dbReference type="TreeFam" id="TF330284"/>
<dbReference type="BioGRID-ORCS" id="239852">
    <property type="hits" value="1 hit in 79 CRISPR screens"/>
</dbReference>
<dbReference type="ChiTaRS" id="Zpld1">
    <property type="organism name" value="mouse"/>
</dbReference>
<dbReference type="PRO" id="PR:Q8BGZ8"/>
<dbReference type="Proteomes" id="UP000000589">
    <property type="component" value="Chromosome 16"/>
</dbReference>
<dbReference type="RNAct" id="Q8BGZ8">
    <property type="molecule type" value="protein"/>
</dbReference>
<dbReference type="Bgee" id="ENSMUSG00000064310">
    <property type="expression patterns" value="Expressed in proximal tubule and 23 other cell types or tissues"/>
</dbReference>
<dbReference type="GO" id="GO:0030659">
    <property type="term" value="C:cytoplasmic vesicle membrane"/>
    <property type="evidence" value="ECO:0007669"/>
    <property type="project" value="UniProtKB-SubCell"/>
</dbReference>
<dbReference type="GO" id="GO:0005576">
    <property type="term" value="C:extracellular region"/>
    <property type="evidence" value="ECO:0007669"/>
    <property type="project" value="UniProtKB-KW"/>
</dbReference>
<dbReference type="GO" id="GO:0060005">
    <property type="term" value="P:vestibular reflex"/>
    <property type="evidence" value="ECO:0000315"/>
    <property type="project" value="MGI"/>
</dbReference>
<dbReference type="Gene3D" id="2.60.40.4100">
    <property type="entry name" value="Zona pellucida, ZP-C domain"/>
    <property type="match status" value="1"/>
</dbReference>
<dbReference type="InterPro" id="IPR055355">
    <property type="entry name" value="ZP-C"/>
</dbReference>
<dbReference type="InterPro" id="IPR042235">
    <property type="entry name" value="ZP-C_dom"/>
</dbReference>
<dbReference type="InterPro" id="IPR055356">
    <property type="entry name" value="ZP-N"/>
</dbReference>
<dbReference type="InterPro" id="IPR001507">
    <property type="entry name" value="ZP_dom"/>
</dbReference>
<dbReference type="PANTHER" id="PTHR14002">
    <property type="entry name" value="ENDOGLIN/TGF-BETA RECEPTOR TYPE III"/>
    <property type="match status" value="1"/>
</dbReference>
<dbReference type="PANTHER" id="PTHR14002:SF24">
    <property type="entry name" value="ZONA PELLUCIDA-LIKE DOMAIN-CONTAINING PROTEIN 1"/>
    <property type="match status" value="1"/>
</dbReference>
<dbReference type="Pfam" id="PF00100">
    <property type="entry name" value="Zona_pellucida"/>
    <property type="match status" value="1"/>
</dbReference>
<dbReference type="Pfam" id="PF23344">
    <property type="entry name" value="ZP-N"/>
    <property type="match status" value="1"/>
</dbReference>
<dbReference type="SMART" id="SM00241">
    <property type="entry name" value="ZP"/>
    <property type="match status" value="1"/>
</dbReference>
<dbReference type="PROSITE" id="PS51034">
    <property type="entry name" value="ZP_2"/>
    <property type="match status" value="1"/>
</dbReference>
<accession>Q8BGZ8</accession>
<accession>Q14BA1</accession>